<dbReference type="EMBL" id="AL009126">
    <property type="protein sequence ID" value="CAB13613.1"/>
    <property type="molecule type" value="Genomic_DNA"/>
</dbReference>
<dbReference type="PIR" id="E69619">
    <property type="entry name" value="E69619"/>
</dbReference>
<dbReference type="RefSeq" id="NP_389611.1">
    <property type="nucleotide sequence ID" value="NC_000964.3"/>
</dbReference>
<dbReference type="RefSeq" id="WP_003245163.1">
    <property type="nucleotide sequence ID" value="NZ_OZ025638.1"/>
</dbReference>
<dbReference type="SMR" id="P0CW82"/>
<dbReference type="FunCoup" id="P0CW82">
    <property type="interactions" value="182"/>
</dbReference>
<dbReference type="STRING" id="224308.BSU17290"/>
<dbReference type="PaxDb" id="224308-BSU17290"/>
<dbReference type="DNASU" id="940051"/>
<dbReference type="EnsemblBacteria" id="CAB13613">
    <property type="protein sequence ID" value="CAB13613"/>
    <property type="gene ID" value="BSU_17290"/>
</dbReference>
<dbReference type="GeneID" id="940051"/>
<dbReference type="KEGG" id="bsu:BSU17290"/>
<dbReference type="PATRIC" id="fig|224308.179.peg.1875"/>
<dbReference type="eggNOG" id="COG2076">
    <property type="taxonomic scope" value="Bacteria"/>
</dbReference>
<dbReference type="InParanoid" id="P0CW82"/>
<dbReference type="OrthoDB" id="21828at2"/>
<dbReference type="PhylomeDB" id="P0CW82"/>
<dbReference type="BioCyc" id="BSUB:BSU17290-MONOMER"/>
<dbReference type="Proteomes" id="UP000001570">
    <property type="component" value="Chromosome"/>
</dbReference>
<dbReference type="GO" id="GO:0005886">
    <property type="term" value="C:plasma membrane"/>
    <property type="evidence" value="ECO:0000318"/>
    <property type="project" value="GO_Central"/>
</dbReference>
<dbReference type="GO" id="GO:0022857">
    <property type="term" value="F:transmembrane transporter activity"/>
    <property type="evidence" value="ECO:0000318"/>
    <property type="project" value="GO_Central"/>
</dbReference>
<dbReference type="GO" id="GO:0055085">
    <property type="term" value="P:transmembrane transport"/>
    <property type="evidence" value="ECO:0000318"/>
    <property type="project" value="GO_Central"/>
</dbReference>
<dbReference type="FunFam" id="1.10.3730.20:FF:000001">
    <property type="entry name" value="Quaternary ammonium compound resistance transporter SugE"/>
    <property type="match status" value="1"/>
</dbReference>
<dbReference type="Gene3D" id="1.10.3730.20">
    <property type="match status" value="1"/>
</dbReference>
<dbReference type="InterPro" id="IPR000390">
    <property type="entry name" value="Small_drug/metabolite_transptr"/>
</dbReference>
<dbReference type="InterPro" id="IPR045324">
    <property type="entry name" value="Small_multidrug_res"/>
</dbReference>
<dbReference type="PANTHER" id="PTHR30561:SF1">
    <property type="entry name" value="MULTIDRUG TRANSPORTER EMRE"/>
    <property type="match status" value="1"/>
</dbReference>
<dbReference type="PANTHER" id="PTHR30561">
    <property type="entry name" value="SMR FAMILY PROTON-DEPENDENT DRUG EFFLUX TRANSPORTER SUGE"/>
    <property type="match status" value="1"/>
</dbReference>
<dbReference type="Pfam" id="PF00893">
    <property type="entry name" value="Multi_Drug_Res"/>
    <property type="match status" value="1"/>
</dbReference>
<dbReference type="SUPFAM" id="SSF103481">
    <property type="entry name" value="Multidrug resistance efflux transporter EmrE"/>
    <property type="match status" value="1"/>
</dbReference>
<gene>
    <name type="primary">ebrB</name>
    <name type="ordered locus">BSU17290</name>
</gene>
<organism>
    <name type="scientific">Bacillus subtilis (strain 168)</name>
    <dbReference type="NCBI Taxonomy" id="224308"/>
    <lineage>
        <taxon>Bacteria</taxon>
        <taxon>Bacillati</taxon>
        <taxon>Bacillota</taxon>
        <taxon>Bacilli</taxon>
        <taxon>Bacillales</taxon>
        <taxon>Bacillaceae</taxon>
        <taxon>Bacillus</taxon>
    </lineage>
</organism>
<comment type="function">
    <text evidence="1">Part of a multidrug efflux pump. Confers resistance to cationic lipophilic dyes such as ethidium bromide, acriflavine, pyronine Y and safranin O. The efflux is probably coupled to an influx of protons (By similarity).</text>
</comment>
<comment type="subunit">
    <text evidence="1">The efflux pump is composed of EbrA and EbrB.</text>
</comment>
<comment type="subcellular location">
    <subcellularLocation>
        <location evidence="3">Cell membrane</location>
        <topology evidence="3">Multi-pass membrane protein</topology>
    </subcellularLocation>
</comment>
<comment type="similarity">
    <text evidence="3">Belongs to the drug/metabolite transporter (DMT) superfamily. Small multidrug resistance (SMR) (TC 2.A.7.1) family. EbrA/EbrB subfamily.</text>
</comment>
<sequence length="117" mass="12324">MRGLLYLALAIVSEVFGSTMLKLSEGFTQAWPIAGVIVGFLSAFTFLSFSLKTIDLSSAYATWSGVGTALTAIVGFLLFGETISLKGVFGLTLVIAGVVVLNQSKAHAEDKKQTACE</sequence>
<name>EBRB_BACSU</name>
<evidence type="ECO:0000250" key="1"/>
<evidence type="ECO:0000255" key="2"/>
<evidence type="ECO:0000305" key="3"/>
<reference key="1">
    <citation type="journal article" date="1997" name="Nature">
        <title>The complete genome sequence of the Gram-positive bacterium Bacillus subtilis.</title>
        <authorList>
            <person name="Kunst F."/>
            <person name="Ogasawara N."/>
            <person name="Moszer I."/>
            <person name="Albertini A.M."/>
            <person name="Alloni G."/>
            <person name="Azevedo V."/>
            <person name="Bertero M.G."/>
            <person name="Bessieres P."/>
            <person name="Bolotin A."/>
            <person name="Borchert S."/>
            <person name="Borriss R."/>
            <person name="Boursier L."/>
            <person name="Brans A."/>
            <person name="Braun M."/>
            <person name="Brignell S.C."/>
            <person name="Bron S."/>
            <person name="Brouillet S."/>
            <person name="Bruschi C.V."/>
            <person name="Caldwell B."/>
            <person name="Capuano V."/>
            <person name="Carter N.M."/>
            <person name="Choi S.-K."/>
            <person name="Codani J.-J."/>
            <person name="Connerton I.F."/>
            <person name="Cummings N.J."/>
            <person name="Daniel R.A."/>
            <person name="Denizot F."/>
            <person name="Devine K.M."/>
            <person name="Duesterhoeft A."/>
            <person name="Ehrlich S.D."/>
            <person name="Emmerson P.T."/>
            <person name="Entian K.-D."/>
            <person name="Errington J."/>
            <person name="Fabret C."/>
            <person name="Ferrari E."/>
            <person name="Foulger D."/>
            <person name="Fritz C."/>
            <person name="Fujita M."/>
            <person name="Fujita Y."/>
            <person name="Fuma S."/>
            <person name="Galizzi A."/>
            <person name="Galleron N."/>
            <person name="Ghim S.-Y."/>
            <person name="Glaser P."/>
            <person name="Goffeau A."/>
            <person name="Golightly E.J."/>
            <person name="Grandi G."/>
            <person name="Guiseppi G."/>
            <person name="Guy B.J."/>
            <person name="Haga K."/>
            <person name="Haiech J."/>
            <person name="Harwood C.R."/>
            <person name="Henaut A."/>
            <person name="Hilbert H."/>
            <person name="Holsappel S."/>
            <person name="Hosono S."/>
            <person name="Hullo M.-F."/>
            <person name="Itaya M."/>
            <person name="Jones L.-M."/>
            <person name="Joris B."/>
            <person name="Karamata D."/>
            <person name="Kasahara Y."/>
            <person name="Klaerr-Blanchard M."/>
            <person name="Klein C."/>
            <person name="Kobayashi Y."/>
            <person name="Koetter P."/>
            <person name="Koningstein G."/>
            <person name="Krogh S."/>
            <person name="Kumano M."/>
            <person name="Kurita K."/>
            <person name="Lapidus A."/>
            <person name="Lardinois S."/>
            <person name="Lauber J."/>
            <person name="Lazarevic V."/>
            <person name="Lee S.-M."/>
            <person name="Levine A."/>
            <person name="Liu H."/>
            <person name="Masuda S."/>
            <person name="Mauel C."/>
            <person name="Medigue C."/>
            <person name="Medina N."/>
            <person name="Mellado R.P."/>
            <person name="Mizuno M."/>
            <person name="Moestl D."/>
            <person name="Nakai S."/>
            <person name="Noback M."/>
            <person name="Noone D."/>
            <person name="O'Reilly M."/>
            <person name="Ogawa K."/>
            <person name="Ogiwara A."/>
            <person name="Oudega B."/>
            <person name="Park S.-H."/>
            <person name="Parro V."/>
            <person name="Pohl T.M."/>
            <person name="Portetelle D."/>
            <person name="Porwollik S."/>
            <person name="Prescott A.M."/>
            <person name="Presecan E."/>
            <person name="Pujic P."/>
            <person name="Purnelle B."/>
            <person name="Rapoport G."/>
            <person name="Rey M."/>
            <person name="Reynolds S."/>
            <person name="Rieger M."/>
            <person name="Rivolta C."/>
            <person name="Rocha E."/>
            <person name="Roche B."/>
            <person name="Rose M."/>
            <person name="Sadaie Y."/>
            <person name="Sato T."/>
            <person name="Scanlan E."/>
            <person name="Schleich S."/>
            <person name="Schroeter R."/>
            <person name="Scoffone F."/>
            <person name="Sekiguchi J."/>
            <person name="Sekowska A."/>
            <person name="Seror S.J."/>
            <person name="Serror P."/>
            <person name="Shin B.-S."/>
            <person name="Soldo B."/>
            <person name="Sorokin A."/>
            <person name="Tacconi E."/>
            <person name="Takagi T."/>
            <person name="Takahashi H."/>
            <person name="Takemaru K."/>
            <person name="Takeuchi M."/>
            <person name="Tamakoshi A."/>
            <person name="Tanaka T."/>
            <person name="Terpstra P."/>
            <person name="Tognoni A."/>
            <person name="Tosato V."/>
            <person name="Uchiyama S."/>
            <person name="Vandenbol M."/>
            <person name="Vannier F."/>
            <person name="Vassarotti A."/>
            <person name="Viari A."/>
            <person name="Wambutt R."/>
            <person name="Wedler E."/>
            <person name="Wedler H."/>
            <person name="Weitzenegger T."/>
            <person name="Winters P."/>
            <person name="Wipat A."/>
            <person name="Yamamoto H."/>
            <person name="Yamane K."/>
            <person name="Yasumoto K."/>
            <person name="Yata K."/>
            <person name="Yoshida K."/>
            <person name="Yoshikawa H.-F."/>
            <person name="Zumstein E."/>
            <person name="Yoshikawa H."/>
            <person name="Danchin A."/>
        </authorList>
    </citation>
    <scope>NUCLEOTIDE SEQUENCE [LARGE SCALE GENOMIC DNA]</scope>
    <source>
        <strain>168</strain>
    </source>
</reference>
<accession>P0CW82</accession>
<accession>O31791</accession>
<accession>Q9R9H9</accession>
<proteinExistence type="inferred from homology"/>
<feature type="chain" id="PRO_0000108093" description="Multidrug resistance protein EbrB">
    <location>
        <begin position="1"/>
        <end position="117"/>
    </location>
</feature>
<feature type="transmembrane region" description="Helical" evidence="2">
    <location>
        <begin position="3"/>
        <end position="23"/>
    </location>
</feature>
<feature type="transmembrane region" description="Helical" evidence="2">
    <location>
        <begin position="31"/>
        <end position="51"/>
    </location>
</feature>
<feature type="transmembrane region" description="Helical" evidence="2">
    <location>
        <begin position="59"/>
        <end position="79"/>
    </location>
</feature>
<feature type="transmembrane region" description="Helical" evidence="2">
    <location>
        <begin position="81"/>
        <end position="101"/>
    </location>
</feature>
<protein>
    <recommendedName>
        <fullName>Multidrug resistance protein EbrB</fullName>
    </recommendedName>
</protein>
<keyword id="KW-1003">Cell membrane</keyword>
<keyword id="KW-0472">Membrane</keyword>
<keyword id="KW-1185">Reference proteome</keyword>
<keyword id="KW-0812">Transmembrane</keyword>
<keyword id="KW-1133">Transmembrane helix</keyword>
<keyword id="KW-0813">Transport</keyword>